<organism>
    <name type="scientific">Campylobacter jejuni subsp. jejuni serotype O:6 (strain 81116 / NCTC 11828)</name>
    <dbReference type="NCBI Taxonomy" id="407148"/>
    <lineage>
        <taxon>Bacteria</taxon>
        <taxon>Pseudomonadati</taxon>
        <taxon>Campylobacterota</taxon>
        <taxon>Epsilonproteobacteria</taxon>
        <taxon>Campylobacterales</taxon>
        <taxon>Campylobacteraceae</taxon>
        <taxon>Campylobacter</taxon>
    </lineage>
</organism>
<reference key="1">
    <citation type="journal article" date="2007" name="J. Bacteriol.">
        <title>The complete genome sequence of Campylobacter jejuni strain 81116 (NCTC11828).</title>
        <authorList>
            <person name="Pearson B.M."/>
            <person name="Gaskin D.J.H."/>
            <person name="Segers R.P.A.M."/>
            <person name="Wells J.M."/>
            <person name="Nuijten P.J.M."/>
            <person name="van Vliet A.H.M."/>
        </authorList>
    </citation>
    <scope>NUCLEOTIDE SEQUENCE [LARGE SCALE GENOMIC DNA]</scope>
    <source>
        <strain>81116 / NCTC 11828</strain>
    </source>
</reference>
<proteinExistence type="inferred from homology"/>
<dbReference type="EC" id="4.2.3.4" evidence="1"/>
<dbReference type="EMBL" id="CP000814">
    <property type="protein sequence ID" value="ABV52544.1"/>
    <property type="molecule type" value="Genomic_DNA"/>
</dbReference>
<dbReference type="RefSeq" id="WP_002866048.1">
    <property type="nucleotide sequence ID" value="NC_009839.1"/>
</dbReference>
<dbReference type="SMR" id="A8FM57"/>
<dbReference type="KEGG" id="cju:C8J_0945"/>
<dbReference type="HOGENOM" id="CLU_001201_0_1_7"/>
<dbReference type="UniPathway" id="UPA00053">
    <property type="reaction ID" value="UER00085"/>
</dbReference>
<dbReference type="GO" id="GO:0005737">
    <property type="term" value="C:cytoplasm"/>
    <property type="evidence" value="ECO:0007669"/>
    <property type="project" value="UniProtKB-SubCell"/>
</dbReference>
<dbReference type="GO" id="GO:0003856">
    <property type="term" value="F:3-dehydroquinate synthase activity"/>
    <property type="evidence" value="ECO:0007669"/>
    <property type="project" value="UniProtKB-UniRule"/>
</dbReference>
<dbReference type="GO" id="GO:0046872">
    <property type="term" value="F:metal ion binding"/>
    <property type="evidence" value="ECO:0007669"/>
    <property type="project" value="UniProtKB-KW"/>
</dbReference>
<dbReference type="GO" id="GO:0000166">
    <property type="term" value="F:nucleotide binding"/>
    <property type="evidence" value="ECO:0007669"/>
    <property type="project" value="UniProtKB-KW"/>
</dbReference>
<dbReference type="GO" id="GO:0008652">
    <property type="term" value="P:amino acid biosynthetic process"/>
    <property type="evidence" value="ECO:0007669"/>
    <property type="project" value="UniProtKB-KW"/>
</dbReference>
<dbReference type="GO" id="GO:0009073">
    <property type="term" value="P:aromatic amino acid family biosynthetic process"/>
    <property type="evidence" value="ECO:0007669"/>
    <property type="project" value="UniProtKB-KW"/>
</dbReference>
<dbReference type="GO" id="GO:0009423">
    <property type="term" value="P:chorismate biosynthetic process"/>
    <property type="evidence" value="ECO:0007669"/>
    <property type="project" value="UniProtKB-UniRule"/>
</dbReference>
<dbReference type="CDD" id="cd08195">
    <property type="entry name" value="DHQS"/>
    <property type="match status" value="1"/>
</dbReference>
<dbReference type="FunFam" id="3.40.50.1970:FF:000007">
    <property type="entry name" value="Pentafunctional AROM polypeptide"/>
    <property type="match status" value="1"/>
</dbReference>
<dbReference type="Gene3D" id="3.40.50.1970">
    <property type="match status" value="1"/>
</dbReference>
<dbReference type="Gene3D" id="1.20.1090.10">
    <property type="entry name" value="Dehydroquinate synthase-like - alpha domain"/>
    <property type="match status" value="1"/>
</dbReference>
<dbReference type="HAMAP" id="MF_00110">
    <property type="entry name" value="DHQ_synthase"/>
    <property type="match status" value="1"/>
</dbReference>
<dbReference type="InterPro" id="IPR050071">
    <property type="entry name" value="Dehydroquinate_synthase"/>
</dbReference>
<dbReference type="InterPro" id="IPR016037">
    <property type="entry name" value="DHQ_synth_AroB"/>
</dbReference>
<dbReference type="InterPro" id="IPR030963">
    <property type="entry name" value="DHQ_synth_fam"/>
</dbReference>
<dbReference type="InterPro" id="IPR030960">
    <property type="entry name" value="DHQS/DOIS_N"/>
</dbReference>
<dbReference type="InterPro" id="IPR056179">
    <property type="entry name" value="DHQS_C"/>
</dbReference>
<dbReference type="NCBIfam" id="TIGR01357">
    <property type="entry name" value="aroB"/>
    <property type="match status" value="1"/>
</dbReference>
<dbReference type="PANTHER" id="PTHR43622">
    <property type="entry name" value="3-DEHYDROQUINATE SYNTHASE"/>
    <property type="match status" value="1"/>
</dbReference>
<dbReference type="PANTHER" id="PTHR43622:SF7">
    <property type="entry name" value="3-DEHYDROQUINATE SYNTHASE, CHLOROPLASTIC"/>
    <property type="match status" value="1"/>
</dbReference>
<dbReference type="Pfam" id="PF01761">
    <property type="entry name" value="DHQ_synthase"/>
    <property type="match status" value="1"/>
</dbReference>
<dbReference type="Pfam" id="PF24621">
    <property type="entry name" value="DHQS_C"/>
    <property type="match status" value="1"/>
</dbReference>
<dbReference type="PIRSF" id="PIRSF001455">
    <property type="entry name" value="DHQ_synth"/>
    <property type="match status" value="1"/>
</dbReference>
<dbReference type="SUPFAM" id="SSF56796">
    <property type="entry name" value="Dehydroquinate synthase-like"/>
    <property type="match status" value="1"/>
</dbReference>
<name>AROB_CAMJ8</name>
<comment type="function">
    <text evidence="1">Catalyzes the conversion of 3-deoxy-D-arabino-heptulosonate 7-phosphate (DAHP) to dehydroquinate (DHQ).</text>
</comment>
<comment type="catalytic activity">
    <reaction evidence="1">
        <text>7-phospho-2-dehydro-3-deoxy-D-arabino-heptonate = 3-dehydroquinate + phosphate</text>
        <dbReference type="Rhea" id="RHEA:21968"/>
        <dbReference type="ChEBI" id="CHEBI:32364"/>
        <dbReference type="ChEBI" id="CHEBI:43474"/>
        <dbReference type="ChEBI" id="CHEBI:58394"/>
        <dbReference type="EC" id="4.2.3.4"/>
    </reaction>
</comment>
<comment type="cofactor">
    <cofactor evidence="1">
        <name>Co(2+)</name>
        <dbReference type="ChEBI" id="CHEBI:48828"/>
    </cofactor>
    <cofactor evidence="1">
        <name>Zn(2+)</name>
        <dbReference type="ChEBI" id="CHEBI:29105"/>
    </cofactor>
    <text evidence="1">Binds 1 divalent metal cation per subunit. Can use either Co(2+) or Zn(2+).</text>
</comment>
<comment type="cofactor">
    <cofactor evidence="1">
        <name>NAD(+)</name>
        <dbReference type="ChEBI" id="CHEBI:57540"/>
    </cofactor>
</comment>
<comment type="pathway">
    <text evidence="1">Metabolic intermediate biosynthesis; chorismate biosynthesis; chorismate from D-erythrose 4-phosphate and phosphoenolpyruvate: step 2/7.</text>
</comment>
<comment type="subcellular location">
    <subcellularLocation>
        <location evidence="1">Cytoplasm</location>
    </subcellularLocation>
</comment>
<comment type="similarity">
    <text evidence="1">Belongs to the sugar phosphate cyclases superfamily. Dehydroquinate synthase family.</text>
</comment>
<gene>
    <name evidence="1" type="primary">aroB</name>
    <name type="ordered locus">C8J_0945</name>
</gene>
<sequence length="351" mass="39391">MQVEVKLKENAYKVYIDELEELEFDSKVFILSNPKISGLHLKTLLSKIKAREIFIAAVKDGEEYKNLSTMEEILNQMFNSKLDRKSVLISFGGGVISDMGGFAASIYQRGIDFINIPTTLLACVDAAVGGKTGVNNNFGKNLIGTFYQPKAVYCESSFLKTLSSRELAAGMAEFIKMAAMFDDSILDFIEKIDEKSFLNATCENEIFTQIIARSIELKSRVVEQDEKESGLRMLLNYGHTFAHVIENFTDYKLYLHGEAVAIGMVMANQLALNLGFLDKMQSQKIKDILLKFGLPISYKINNVDEFYEAFFMDKKSSNKKINFVLAGPLGKGLIKGDISKEDIIATLREFQ</sequence>
<feature type="chain" id="PRO_1000094481" description="3-dehydroquinate synthase">
    <location>
        <begin position="1"/>
        <end position="351"/>
    </location>
</feature>
<feature type="binding site" evidence="1">
    <location>
        <begin position="60"/>
        <end position="65"/>
    </location>
    <ligand>
        <name>NAD(+)</name>
        <dbReference type="ChEBI" id="CHEBI:57540"/>
    </ligand>
</feature>
<feature type="binding site" evidence="1">
    <location>
        <begin position="94"/>
        <end position="98"/>
    </location>
    <ligand>
        <name>NAD(+)</name>
        <dbReference type="ChEBI" id="CHEBI:57540"/>
    </ligand>
</feature>
<feature type="binding site" evidence="1">
    <location>
        <begin position="118"/>
        <end position="119"/>
    </location>
    <ligand>
        <name>NAD(+)</name>
        <dbReference type="ChEBI" id="CHEBI:57540"/>
    </ligand>
</feature>
<feature type="binding site" evidence="1">
    <location>
        <position position="131"/>
    </location>
    <ligand>
        <name>NAD(+)</name>
        <dbReference type="ChEBI" id="CHEBI:57540"/>
    </ligand>
</feature>
<feature type="binding site" evidence="1">
    <location>
        <position position="140"/>
    </location>
    <ligand>
        <name>NAD(+)</name>
        <dbReference type="ChEBI" id="CHEBI:57540"/>
    </ligand>
</feature>
<feature type="binding site" evidence="1">
    <location>
        <begin position="158"/>
        <end position="161"/>
    </location>
    <ligand>
        <name>NAD(+)</name>
        <dbReference type="ChEBI" id="CHEBI:57540"/>
    </ligand>
</feature>
<feature type="binding site" evidence="1">
    <location>
        <position position="173"/>
    </location>
    <ligand>
        <name>Zn(2+)</name>
        <dbReference type="ChEBI" id="CHEBI:29105"/>
    </ligand>
</feature>
<feature type="binding site" evidence="1">
    <location>
        <position position="239"/>
    </location>
    <ligand>
        <name>Zn(2+)</name>
        <dbReference type="ChEBI" id="CHEBI:29105"/>
    </ligand>
</feature>
<feature type="binding site" evidence="1">
    <location>
        <position position="256"/>
    </location>
    <ligand>
        <name>Zn(2+)</name>
        <dbReference type="ChEBI" id="CHEBI:29105"/>
    </ligand>
</feature>
<evidence type="ECO:0000255" key="1">
    <source>
        <dbReference type="HAMAP-Rule" id="MF_00110"/>
    </source>
</evidence>
<keyword id="KW-0028">Amino-acid biosynthesis</keyword>
<keyword id="KW-0057">Aromatic amino acid biosynthesis</keyword>
<keyword id="KW-0170">Cobalt</keyword>
<keyword id="KW-0963">Cytoplasm</keyword>
<keyword id="KW-0456">Lyase</keyword>
<keyword id="KW-0479">Metal-binding</keyword>
<keyword id="KW-0520">NAD</keyword>
<keyword id="KW-0547">Nucleotide-binding</keyword>
<keyword id="KW-0862">Zinc</keyword>
<accession>A8FM57</accession>
<protein>
    <recommendedName>
        <fullName evidence="1">3-dehydroquinate synthase</fullName>
        <shortName evidence="1">DHQS</shortName>
        <ecNumber evidence="1">4.2.3.4</ecNumber>
    </recommendedName>
</protein>